<evidence type="ECO:0000255" key="1">
    <source>
        <dbReference type="HAMAP-Rule" id="MF_00318"/>
    </source>
</evidence>
<name>ENO_ONYPE</name>
<accession>Q6YQT9</accession>
<keyword id="KW-0963">Cytoplasm</keyword>
<keyword id="KW-0324">Glycolysis</keyword>
<keyword id="KW-0456">Lyase</keyword>
<keyword id="KW-0460">Magnesium</keyword>
<keyword id="KW-0479">Metal-binding</keyword>
<keyword id="KW-0964">Secreted</keyword>
<organism>
    <name type="scientific">Onion yellows phytoplasma (strain OY-M)</name>
    <dbReference type="NCBI Taxonomy" id="262768"/>
    <lineage>
        <taxon>Bacteria</taxon>
        <taxon>Bacillati</taxon>
        <taxon>Mycoplasmatota</taxon>
        <taxon>Mollicutes</taxon>
        <taxon>Acholeplasmatales</taxon>
        <taxon>Acholeplasmataceae</taxon>
        <taxon>Candidatus Phytoplasma</taxon>
        <taxon>16SrI (Aster yellows group)</taxon>
    </lineage>
</organism>
<feature type="chain" id="PRO_0000133939" description="Enolase">
    <location>
        <begin position="1"/>
        <end position="430"/>
    </location>
</feature>
<feature type="active site" description="Proton donor" evidence="1">
    <location>
        <position position="205"/>
    </location>
</feature>
<feature type="active site" description="Proton acceptor" evidence="1">
    <location>
        <position position="340"/>
    </location>
</feature>
<feature type="binding site" evidence="1">
    <location>
        <position position="163"/>
    </location>
    <ligand>
        <name>(2R)-2-phosphoglycerate</name>
        <dbReference type="ChEBI" id="CHEBI:58289"/>
    </ligand>
</feature>
<feature type="binding site" evidence="1">
    <location>
        <position position="242"/>
    </location>
    <ligand>
        <name>Mg(2+)</name>
        <dbReference type="ChEBI" id="CHEBI:18420"/>
    </ligand>
</feature>
<feature type="binding site" evidence="1">
    <location>
        <position position="288"/>
    </location>
    <ligand>
        <name>Mg(2+)</name>
        <dbReference type="ChEBI" id="CHEBI:18420"/>
    </ligand>
</feature>
<feature type="binding site" evidence="1">
    <location>
        <position position="315"/>
    </location>
    <ligand>
        <name>Mg(2+)</name>
        <dbReference type="ChEBI" id="CHEBI:18420"/>
    </ligand>
</feature>
<feature type="binding site" evidence="1">
    <location>
        <position position="340"/>
    </location>
    <ligand>
        <name>(2R)-2-phosphoglycerate</name>
        <dbReference type="ChEBI" id="CHEBI:58289"/>
    </ligand>
</feature>
<feature type="binding site" evidence="1">
    <location>
        <position position="369"/>
    </location>
    <ligand>
        <name>(2R)-2-phosphoglycerate</name>
        <dbReference type="ChEBI" id="CHEBI:58289"/>
    </ligand>
</feature>
<feature type="binding site" evidence="1">
    <location>
        <position position="370"/>
    </location>
    <ligand>
        <name>(2R)-2-phosphoglycerate</name>
        <dbReference type="ChEBI" id="CHEBI:58289"/>
    </ligand>
</feature>
<feature type="binding site" evidence="1">
    <location>
        <position position="391"/>
    </location>
    <ligand>
        <name>(2R)-2-phosphoglycerate</name>
        <dbReference type="ChEBI" id="CHEBI:58289"/>
    </ligand>
</feature>
<reference key="1">
    <citation type="journal article" date="2004" name="Nat. Genet.">
        <title>Reductive evolution suggested from the complete genome sequence of a plant-pathogenic phytoplasma.</title>
        <authorList>
            <person name="Oshima K."/>
            <person name="Kakizawa S."/>
            <person name="Nishigawa H."/>
            <person name="Jung H.-Y."/>
            <person name="Wei W."/>
            <person name="Suzuki S."/>
            <person name="Arashida R."/>
            <person name="Nakata D."/>
            <person name="Miyata S."/>
            <person name="Ugaki M."/>
            <person name="Namba S."/>
        </authorList>
    </citation>
    <scope>NUCLEOTIDE SEQUENCE [LARGE SCALE GENOMIC DNA]</scope>
    <source>
        <strain>OY-M</strain>
    </source>
</reference>
<protein>
    <recommendedName>
        <fullName evidence="1">Enolase</fullName>
        <ecNumber evidence="1">4.2.1.11</ecNumber>
    </recommendedName>
    <alternativeName>
        <fullName evidence="1">2-phospho-D-glycerate hydro-lyase</fullName>
    </alternativeName>
    <alternativeName>
        <fullName evidence="1">2-phosphoglycerate dehydratase</fullName>
    </alternativeName>
</protein>
<sequence>MPYIESILAREVLDSRGNPTVEVEVYTESGAFGRAIVPSGASTGQYEAVELRDGDAQRFLGKGVLQAVKNVIEVIQPELEGYSVLEQTLIDKLLIKLDGTPNKSNLGANAILGVSLACAKAAANYLNLEFYQYVGGVLPKQMPVPMMNVINGGAHASNSVDFQEFMILPTGPTSFKEALRYGAEVFHHLGKILKQKGLPTTVGDEGGYAPDLNSNEEALQIILEAIKSAGYEPGKDIFLGMDVAASEFYDKKLQKYVLASENNKAFSSQELVHYYETLVSKYPIISIEDGLDENDWDGWKYLTQKLGNQIQLVGDDLFVTNTQKLAQGIENKIGNSILIKLNQIGTLTETLETIEMAKKASYTAVISHRSGETEDTTIADLAVATNAGQIKTGSCSRTDRMAKYNQLLRIEDQLVEAPFLGLKTFYNLKK</sequence>
<proteinExistence type="inferred from homology"/>
<dbReference type="EC" id="4.2.1.11" evidence="1"/>
<dbReference type="EMBL" id="AP006628">
    <property type="protein sequence ID" value="BAD04369.1"/>
    <property type="molecule type" value="Genomic_DNA"/>
</dbReference>
<dbReference type="SMR" id="Q6YQT9"/>
<dbReference type="STRING" id="262768.PAM_284"/>
<dbReference type="KEGG" id="poy:PAM_284"/>
<dbReference type="eggNOG" id="COG0148">
    <property type="taxonomic scope" value="Bacteria"/>
</dbReference>
<dbReference type="HOGENOM" id="CLU_031223_2_1_14"/>
<dbReference type="BioCyc" id="OYEL262768:G1G26-342-MONOMER"/>
<dbReference type="UniPathway" id="UPA00109">
    <property type="reaction ID" value="UER00187"/>
</dbReference>
<dbReference type="Proteomes" id="UP000002523">
    <property type="component" value="Chromosome"/>
</dbReference>
<dbReference type="GO" id="GO:0009986">
    <property type="term" value="C:cell surface"/>
    <property type="evidence" value="ECO:0007669"/>
    <property type="project" value="UniProtKB-SubCell"/>
</dbReference>
<dbReference type="GO" id="GO:0005576">
    <property type="term" value="C:extracellular region"/>
    <property type="evidence" value="ECO:0007669"/>
    <property type="project" value="UniProtKB-SubCell"/>
</dbReference>
<dbReference type="GO" id="GO:0000015">
    <property type="term" value="C:phosphopyruvate hydratase complex"/>
    <property type="evidence" value="ECO:0007669"/>
    <property type="project" value="InterPro"/>
</dbReference>
<dbReference type="GO" id="GO:0000287">
    <property type="term" value="F:magnesium ion binding"/>
    <property type="evidence" value="ECO:0007669"/>
    <property type="project" value="UniProtKB-UniRule"/>
</dbReference>
<dbReference type="GO" id="GO:0004634">
    <property type="term" value="F:phosphopyruvate hydratase activity"/>
    <property type="evidence" value="ECO:0007669"/>
    <property type="project" value="UniProtKB-UniRule"/>
</dbReference>
<dbReference type="GO" id="GO:0006096">
    <property type="term" value="P:glycolytic process"/>
    <property type="evidence" value="ECO:0007669"/>
    <property type="project" value="UniProtKB-UniRule"/>
</dbReference>
<dbReference type="CDD" id="cd03313">
    <property type="entry name" value="enolase"/>
    <property type="match status" value="1"/>
</dbReference>
<dbReference type="FunFam" id="3.20.20.120:FF:000001">
    <property type="entry name" value="Enolase"/>
    <property type="match status" value="1"/>
</dbReference>
<dbReference type="FunFam" id="3.30.390.10:FF:000001">
    <property type="entry name" value="Enolase"/>
    <property type="match status" value="1"/>
</dbReference>
<dbReference type="Gene3D" id="3.20.20.120">
    <property type="entry name" value="Enolase-like C-terminal domain"/>
    <property type="match status" value="1"/>
</dbReference>
<dbReference type="Gene3D" id="3.30.390.10">
    <property type="entry name" value="Enolase-like, N-terminal domain"/>
    <property type="match status" value="1"/>
</dbReference>
<dbReference type="HAMAP" id="MF_00318">
    <property type="entry name" value="Enolase"/>
    <property type="match status" value="1"/>
</dbReference>
<dbReference type="InterPro" id="IPR000941">
    <property type="entry name" value="Enolase"/>
</dbReference>
<dbReference type="InterPro" id="IPR036849">
    <property type="entry name" value="Enolase-like_C_sf"/>
</dbReference>
<dbReference type="InterPro" id="IPR029017">
    <property type="entry name" value="Enolase-like_N"/>
</dbReference>
<dbReference type="InterPro" id="IPR020810">
    <property type="entry name" value="Enolase_C"/>
</dbReference>
<dbReference type="InterPro" id="IPR020809">
    <property type="entry name" value="Enolase_CS"/>
</dbReference>
<dbReference type="InterPro" id="IPR020811">
    <property type="entry name" value="Enolase_N"/>
</dbReference>
<dbReference type="NCBIfam" id="TIGR01060">
    <property type="entry name" value="eno"/>
    <property type="match status" value="1"/>
</dbReference>
<dbReference type="PANTHER" id="PTHR11902">
    <property type="entry name" value="ENOLASE"/>
    <property type="match status" value="1"/>
</dbReference>
<dbReference type="PANTHER" id="PTHR11902:SF1">
    <property type="entry name" value="ENOLASE"/>
    <property type="match status" value="1"/>
</dbReference>
<dbReference type="Pfam" id="PF00113">
    <property type="entry name" value="Enolase_C"/>
    <property type="match status" value="1"/>
</dbReference>
<dbReference type="Pfam" id="PF03952">
    <property type="entry name" value="Enolase_N"/>
    <property type="match status" value="1"/>
</dbReference>
<dbReference type="PIRSF" id="PIRSF001400">
    <property type="entry name" value="Enolase"/>
    <property type="match status" value="1"/>
</dbReference>
<dbReference type="PRINTS" id="PR00148">
    <property type="entry name" value="ENOLASE"/>
</dbReference>
<dbReference type="SFLD" id="SFLDS00001">
    <property type="entry name" value="Enolase"/>
    <property type="match status" value="1"/>
</dbReference>
<dbReference type="SFLD" id="SFLDF00002">
    <property type="entry name" value="enolase"/>
    <property type="match status" value="1"/>
</dbReference>
<dbReference type="SMART" id="SM01192">
    <property type="entry name" value="Enolase_C"/>
    <property type="match status" value="1"/>
</dbReference>
<dbReference type="SMART" id="SM01193">
    <property type="entry name" value="Enolase_N"/>
    <property type="match status" value="1"/>
</dbReference>
<dbReference type="SUPFAM" id="SSF51604">
    <property type="entry name" value="Enolase C-terminal domain-like"/>
    <property type="match status" value="1"/>
</dbReference>
<dbReference type="SUPFAM" id="SSF54826">
    <property type="entry name" value="Enolase N-terminal domain-like"/>
    <property type="match status" value="1"/>
</dbReference>
<dbReference type="PROSITE" id="PS00164">
    <property type="entry name" value="ENOLASE"/>
    <property type="match status" value="1"/>
</dbReference>
<gene>
    <name evidence="1" type="primary">eno</name>
    <name type="ordered locus">PAM_284</name>
</gene>
<comment type="function">
    <text evidence="1">Catalyzes the reversible conversion of 2-phosphoglycerate (2-PG) into phosphoenolpyruvate (PEP). It is essential for the degradation of carbohydrates via glycolysis.</text>
</comment>
<comment type="catalytic activity">
    <reaction evidence="1">
        <text>(2R)-2-phosphoglycerate = phosphoenolpyruvate + H2O</text>
        <dbReference type="Rhea" id="RHEA:10164"/>
        <dbReference type="ChEBI" id="CHEBI:15377"/>
        <dbReference type="ChEBI" id="CHEBI:58289"/>
        <dbReference type="ChEBI" id="CHEBI:58702"/>
        <dbReference type="EC" id="4.2.1.11"/>
    </reaction>
</comment>
<comment type="cofactor">
    <cofactor evidence="1">
        <name>Mg(2+)</name>
        <dbReference type="ChEBI" id="CHEBI:18420"/>
    </cofactor>
    <text evidence="1">Binds a second Mg(2+) ion via substrate during catalysis.</text>
</comment>
<comment type="pathway">
    <text evidence="1">Carbohydrate degradation; glycolysis; pyruvate from D-glyceraldehyde 3-phosphate: step 4/5.</text>
</comment>
<comment type="subcellular location">
    <subcellularLocation>
        <location evidence="1">Cytoplasm</location>
    </subcellularLocation>
    <subcellularLocation>
        <location evidence="1">Secreted</location>
    </subcellularLocation>
    <subcellularLocation>
        <location evidence="1">Cell surface</location>
    </subcellularLocation>
    <text evidence="1">Fractions of enolase are present in both the cytoplasm and on the cell surface.</text>
</comment>
<comment type="similarity">
    <text evidence="1">Belongs to the enolase family.</text>
</comment>